<reference key="1">
    <citation type="journal article" date="2012" name="Stand. Genomic Sci.">
        <title>Complete genome sequence of Polynucleobacter necessarius subsp. asymbioticus type strain (QLW-P1DMWA-1(T)).</title>
        <authorList>
            <person name="Meincke L."/>
            <person name="Copeland A."/>
            <person name="Lapidus A."/>
            <person name="Lucas S."/>
            <person name="Berry K.W."/>
            <person name="Del Rio T.G."/>
            <person name="Hammon N."/>
            <person name="Dalin E."/>
            <person name="Tice H."/>
            <person name="Pitluck S."/>
            <person name="Richardson P."/>
            <person name="Bruce D."/>
            <person name="Goodwin L."/>
            <person name="Han C."/>
            <person name="Tapia R."/>
            <person name="Detter J.C."/>
            <person name="Schmutz J."/>
            <person name="Brettin T."/>
            <person name="Larimer F."/>
            <person name="Land M."/>
            <person name="Hauser L."/>
            <person name="Kyrpides N.C."/>
            <person name="Ivanova N."/>
            <person name="Goker M."/>
            <person name="Woyke T."/>
            <person name="Wu Q.L."/>
            <person name="Pockl M."/>
            <person name="Hahn M.W."/>
            <person name="Klenk H.P."/>
        </authorList>
    </citation>
    <scope>NUCLEOTIDE SEQUENCE [LARGE SCALE GENOMIC DNA]</scope>
    <source>
        <strain>DSM 18221 / CIP 109841 / QLW-P1DMWA-1</strain>
    </source>
</reference>
<comment type="catalytic activity">
    <reaction evidence="1">
        <text>1-(2-carboxyphenylamino)-1-deoxy-D-ribulose 5-phosphate + H(+) = (1S,2R)-1-C-(indol-3-yl)glycerol 3-phosphate + CO2 + H2O</text>
        <dbReference type="Rhea" id="RHEA:23476"/>
        <dbReference type="ChEBI" id="CHEBI:15377"/>
        <dbReference type="ChEBI" id="CHEBI:15378"/>
        <dbReference type="ChEBI" id="CHEBI:16526"/>
        <dbReference type="ChEBI" id="CHEBI:58613"/>
        <dbReference type="ChEBI" id="CHEBI:58866"/>
        <dbReference type="EC" id="4.1.1.48"/>
    </reaction>
</comment>
<comment type="pathway">
    <text evidence="1">Amino-acid biosynthesis; L-tryptophan biosynthesis; L-tryptophan from chorismate: step 4/5.</text>
</comment>
<comment type="similarity">
    <text evidence="1">Belongs to the TrpC family.</text>
</comment>
<feature type="chain" id="PRO_1000076422" description="Indole-3-glycerol phosphate synthase">
    <location>
        <begin position="1"/>
        <end position="267"/>
    </location>
</feature>
<gene>
    <name evidence="1" type="primary">trpC</name>
    <name type="ordered locus">Pnuc_0145</name>
</gene>
<protein>
    <recommendedName>
        <fullName evidence="1">Indole-3-glycerol phosphate synthase</fullName>
        <shortName evidence="1">IGPS</shortName>
        <ecNumber evidence="1">4.1.1.48</ecNumber>
    </recommendedName>
</protein>
<dbReference type="EC" id="4.1.1.48" evidence="1"/>
<dbReference type="EMBL" id="CP000655">
    <property type="protein sequence ID" value="ABP33366.1"/>
    <property type="molecule type" value="Genomic_DNA"/>
</dbReference>
<dbReference type="RefSeq" id="WP_011901991.1">
    <property type="nucleotide sequence ID" value="NC_009379.1"/>
</dbReference>
<dbReference type="SMR" id="A4SV52"/>
<dbReference type="GeneID" id="31480494"/>
<dbReference type="KEGG" id="pnu:Pnuc_0145"/>
<dbReference type="eggNOG" id="COG0134">
    <property type="taxonomic scope" value="Bacteria"/>
</dbReference>
<dbReference type="HOGENOM" id="CLU_034247_2_0_4"/>
<dbReference type="UniPathway" id="UPA00035">
    <property type="reaction ID" value="UER00043"/>
</dbReference>
<dbReference type="Proteomes" id="UP000000231">
    <property type="component" value="Chromosome"/>
</dbReference>
<dbReference type="GO" id="GO:0004425">
    <property type="term" value="F:indole-3-glycerol-phosphate synthase activity"/>
    <property type="evidence" value="ECO:0007669"/>
    <property type="project" value="UniProtKB-UniRule"/>
</dbReference>
<dbReference type="GO" id="GO:0004640">
    <property type="term" value="F:phosphoribosylanthranilate isomerase activity"/>
    <property type="evidence" value="ECO:0007669"/>
    <property type="project" value="TreeGrafter"/>
</dbReference>
<dbReference type="GO" id="GO:0000162">
    <property type="term" value="P:L-tryptophan biosynthetic process"/>
    <property type="evidence" value="ECO:0007669"/>
    <property type="project" value="UniProtKB-UniRule"/>
</dbReference>
<dbReference type="CDD" id="cd00331">
    <property type="entry name" value="IGPS"/>
    <property type="match status" value="1"/>
</dbReference>
<dbReference type="FunFam" id="3.20.20.70:FF:000024">
    <property type="entry name" value="Indole-3-glycerol phosphate synthase"/>
    <property type="match status" value="1"/>
</dbReference>
<dbReference type="Gene3D" id="3.20.20.70">
    <property type="entry name" value="Aldolase class I"/>
    <property type="match status" value="1"/>
</dbReference>
<dbReference type="HAMAP" id="MF_00134_B">
    <property type="entry name" value="IGPS_B"/>
    <property type="match status" value="1"/>
</dbReference>
<dbReference type="InterPro" id="IPR013785">
    <property type="entry name" value="Aldolase_TIM"/>
</dbReference>
<dbReference type="InterPro" id="IPR045186">
    <property type="entry name" value="Indole-3-glycerol_P_synth"/>
</dbReference>
<dbReference type="InterPro" id="IPR013798">
    <property type="entry name" value="Indole-3-glycerol_P_synth_dom"/>
</dbReference>
<dbReference type="InterPro" id="IPR001468">
    <property type="entry name" value="Indole-3-GlycerolPSynthase_CS"/>
</dbReference>
<dbReference type="InterPro" id="IPR011060">
    <property type="entry name" value="RibuloseP-bd_barrel"/>
</dbReference>
<dbReference type="NCBIfam" id="NF001373">
    <property type="entry name" value="PRK00278.1-6"/>
    <property type="match status" value="1"/>
</dbReference>
<dbReference type="NCBIfam" id="NF001377">
    <property type="entry name" value="PRK00278.2-4"/>
    <property type="match status" value="1"/>
</dbReference>
<dbReference type="PANTHER" id="PTHR22854:SF2">
    <property type="entry name" value="INDOLE-3-GLYCEROL-PHOSPHATE SYNTHASE"/>
    <property type="match status" value="1"/>
</dbReference>
<dbReference type="PANTHER" id="PTHR22854">
    <property type="entry name" value="TRYPTOPHAN BIOSYNTHESIS PROTEIN"/>
    <property type="match status" value="1"/>
</dbReference>
<dbReference type="Pfam" id="PF00218">
    <property type="entry name" value="IGPS"/>
    <property type="match status" value="1"/>
</dbReference>
<dbReference type="SUPFAM" id="SSF51366">
    <property type="entry name" value="Ribulose-phoshate binding barrel"/>
    <property type="match status" value="1"/>
</dbReference>
<dbReference type="PROSITE" id="PS00614">
    <property type="entry name" value="IGPS"/>
    <property type="match status" value="1"/>
</dbReference>
<keyword id="KW-0028">Amino-acid biosynthesis</keyword>
<keyword id="KW-0057">Aromatic amino acid biosynthesis</keyword>
<keyword id="KW-0210">Decarboxylase</keyword>
<keyword id="KW-0456">Lyase</keyword>
<keyword id="KW-1185">Reference proteome</keyword>
<keyword id="KW-0822">Tryptophan biosynthesis</keyword>
<organism>
    <name type="scientific">Polynucleobacter asymbioticus (strain DSM 18221 / CIP 109841 / QLW-P1DMWA-1)</name>
    <name type="common">Polynucleobacter necessarius subsp. asymbioticus</name>
    <dbReference type="NCBI Taxonomy" id="312153"/>
    <lineage>
        <taxon>Bacteria</taxon>
        <taxon>Pseudomonadati</taxon>
        <taxon>Pseudomonadota</taxon>
        <taxon>Betaproteobacteria</taxon>
        <taxon>Burkholderiales</taxon>
        <taxon>Burkholderiaceae</taxon>
        <taxon>Polynucleobacter</taxon>
    </lineage>
</organism>
<proteinExistence type="inferred from homology"/>
<evidence type="ECO:0000255" key="1">
    <source>
        <dbReference type="HAMAP-Rule" id="MF_00134"/>
    </source>
</evidence>
<sequence length="267" mass="29206">MSDILDKIVATKKIEVAHNSSKISLGNHREQAEANNQSNLLKPRGFIQAIERKISAGKAGVITEVKKASPSKGILRENFISAEIAQSYEKHGAACLSVLTDSDYFQGCNAYLQEARAACQIPVLRKDFTIDPYQIYEARAIGADAILLIVACLELNQMMELEACAHELGLDVLVEVHNAPELEQALELKTPLLGINNRNLKTFEVSLQTTLSLLSSVPKNKTLVTESGILSRADVELMRKNQINAFLVGEAFMRAPDPGTALSELFA</sequence>
<name>TRPC_POLAQ</name>
<accession>A4SV52</accession>